<proteinExistence type="evidence at protein level"/>
<comment type="function">
    <text evidence="1">Required for efficient assembly of cytochrome c oxidase in the mitochondrial inner membrane. Seems to be involved in the SHY1-mediated step of cytochrome c oxidase maturation. May aid in stabilizing an early COX1 intermediate containing the nuclear subunits COX5A and COX6.</text>
</comment>
<comment type="subcellular location">
    <subcellularLocation>
        <location evidence="1">Mitochondrion inner membrane</location>
        <topology evidence="1">Peripheral membrane protein</topology>
        <orientation evidence="1">Matrix side</orientation>
    </subcellularLocation>
    <text>Mitochondrial matrix soluble protein partially associated with the inner membrane.</text>
</comment>
<comment type="similarity">
    <text evidence="2">Belongs to the COA2 family.</text>
</comment>
<keyword id="KW-0472">Membrane</keyword>
<keyword id="KW-0496">Mitochondrion</keyword>
<keyword id="KW-0999">Mitochondrion inner membrane</keyword>
<keyword id="KW-1185">Reference proteome</keyword>
<dbReference type="EMBL" id="Z73545">
    <property type="status" value="NOT_ANNOTATED_CDS"/>
    <property type="molecule type" value="Genomic_DNA"/>
</dbReference>
<dbReference type="EMBL" id="BK006949">
    <property type="protein sequence ID" value="DAA11245.1"/>
    <property type="molecule type" value="Genomic_DNA"/>
</dbReference>
<dbReference type="RefSeq" id="NP_878179.1">
    <property type="nucleotide sequence ID" value="NM_001184537.1"/>
</dbReference>
<dbReference type="SMR" id="Q3E823"/>
<dbReference type="BioGRID" id="37060">
    <property type="interactions" value="44"/>
</dbReference>
<dbReference type="FunCoup" id="Q3E823">
    <property type="interactions" value="37"/>
</dbReference>
<dbReference type="STRING" id="4932.YPL189C-A"/>
<dbReference type="PaxDb" id="4932-YPL189C-A"/>
<dbReference type="PeptideAtlas" id="Q3E823"/>
<dbReference type="EnsemblFungi" id="YPL189C-A_mRNA">
    <property type="protein sequence ID" value="YPL189C-A"/>
    <property type="gene ID" value="YPL189C-A"/>
</dbReference>
<dbReference type="GeneID" id="1466518"/>
<dbReference type="KEGG" id="sce:YPL189C-A"/>
<dbReference type="AGR" id="SGD:S000028527"/>
<dbReference type="SGD" id="S000028527">
    <property type="gene designation" value="COA2"/>
</dbReference>
<dbReference type="VEuPathDB" id="FungiDB:YPL189C-A"/>
<dbReference type="eggNOG" id="ENOG502SBZ5">
    <property type="taxonomic scope" value="Eukaryota"/>
</dbReference>
<dbReference type="HOGENOM" id="CLU_196962_0_0_1"/>
<dbReference type="InParanoid" id="Q3E823"/>
<dbReference type="OMA" id="NEDETMY"/>
<dbReference type="OrthoDB" id="4065690at2759"/>
<dbReference type="BioCyc" id="YEAST:G3O-34363-MONOMER"/>
<dbReference type="BioGRID-ORCS" id="1466518">
    <property type="hits" value="0 hits in 10 CRISPR screens"/>
</dbReference>
<dbReference type="PRO" id="PR:Q3E823"/>
<dbReference type="Proteomes" id="UP000002311">
    <property type="component" value="Chromosome XVI"/>
</dbReference>
<dbReference type="RNAct" id="Q3E823">
    <property type="molecule type" value="protein"/>
</dbReference>
<dbReference type="GO" id="GO:0005743">
    <property type="term" value="C:mitochondrial inner membrane"/>
    <property type="evidence" value="ECO:0007669"/>
    <property type="project" value="UniProtKB-SubCell"/>
</dbReference>
<dbReference type="GO" id="GO:0005759">
    <property type="term" value="C:mitochondrial matrix"/>
    <property type="evidence" value="ECO:0000314"/>
    <property type="project" value="SGD"/>
</dbReference>
<dbReference type="GO" id="GO:0033617">
    <property type="term" value="P:mitochondrial cytochrome c oxidase assembly"/>
    <property type="evidence" value="ECO:0000315"/>
    <property type="project" value="SGD"/>
</dbReference>
<dbReference type="InterPro" id="IPR031459">
    <property type="entry name" value="Coa2"/>
</dbReference>
<dbReference type="PANTHER" id="PTHR40020">
    <property type="entry name" value="CYTOCHROME C OXIDASE ASSEMBLY FACTOR 2"/>
    <property type="match status" value="1"/>
</dbReference>
<dbReference type="PANTHER" id="PTHR40020:SF1">
    <property type="entry name" value="CYTOCHROME C OXIDASE ASSEMBLY FACTOR 2"/>
    <property type="match status" value="1"/>
</dbReference>
<dbReference type="Pfam" id="PF17051">
    <property type="entry name" value="COA2"/>
    <property type="match status" value="1"/>
</dbReference>
<reference key="1">
    <citation type="journal article" date="1997" name="Nature">
        <title>The nucleotide sequence of Saccharomyces cerevisiae chromosome XVI.</title>
        <authorList>
            <person name="Bussey H."/>
            <person name="Storms R.K."/>
            <person name="Ahmed A."/>
            <person name="Albermann K."/>
            <person name="Allen E."/>
            <person name="Ansorge W."/>
            <person name="Araujo R."/>
            <person name="Aparicio A."/>
            <person name="Barrell B.G."/>
            <person name="Badcock K."/>
            <person name="Benes V."/>
            <person name="Botstein D."/>
            <person name="Bowman S."/>
            <person name="Brueckner M."/>
            <person name="Carpenter J."/>
            <person name="Cherry J.M."/>
            <person name="Chung E."/>
            <person name="Churcher C.M."/>
            <person name="Coster F."/>
            <person name="Davis K."/>
            <person name="Davis R.W."/>
            <person name="Dietrich F.S."/>
            <person name="Delius H."/>
            <person name="DiPaolo T."/>
            <person name="Dubois E."/>
            <person name="Duesterhoeft A."/>
            <person name="Duncan M."/>
            <person name="Floeth M."/>
            <person name="Fortin N."/>
            <person name="Friesen J.D."/>
            <person name="Fritz C."/>
            <person name="Goffeau A."/>
            <person name="Hall J."/>
            <person name="Hebling U."/>
            <person name="Heumann K."/>
            <person name="Hilbert H."/>
            <person name="Hillier L.W."/>
            <person name="Hunicke-Smith S."/>
            <person name="Hyman R.W."/>
            <person name="Johnston M."/>
            <person name="Kalman S."/>
            <person name="Kleine K."/>
            <person name="Komp C."/>
            <person name="Kurdi O."/>
            <person name="Lashkari D."/>
            <person name="Lew H."/>
            <person name="Lin A."/>
            <person name="Lin D."/>
            <person name="Louis E.J."/>
            <person name="Marathe R."/>
            <person name="Messenguy F."/>
            <person name="Mewes H.-W."/>
            <person name="Mirtipati S."/>
            <person name="Moestl D."/>
            <person name="Mueller-Auer S."/>
            <person name="Namath A."/>
            <person name="Nentwich U."/>
            <person name="Oefner P."/>
            <person name="Pearson D."/>
            <person name="Petel F.X."/>
            <person name="Pohl T.M."/>
            <person name="Purnelle B."/>
            <person name="Rajandream M.A."/>
            <person name="Rechmann S."/>
            <person name="Rieger M."/>
            <person name="Riles L."/>
            <person name="Roberts D."/>
            <person name="Schaefer M."/>
            <person name="Scharfe M."/>
            <person name="Scherens B."/>
            <person name="Schramm S."/>
            <person name="Schroeder M."/>
            <person name="Sdicu A.-M."/>
            <person name="Tettelin H."/>
            <person name="Urrestarazu L.A."/>
            <person name="Ushinsky S."/>
            <person name="Vierendeels F."/>
            <person name="Vissers S."/>
            <person name="Voss H."/>
            <person name="Walsh S.V."/>
            <person name="Wambutt R."/>
            <person name="Wang Y."/>
            <person name="Wedler E."/>
            <person name="Wedler H."/>
            <person name="Winnett E."/>
            <person name="Zhong W.-W."/>
            <person name="Zollner A."/>
            <person name="Vo D.H."/>
            <person name="Hani J."/>
        </authorList>
    </citation>
    <scope>NUCLEOTIDE SEQUENCE [LARGE SCALE GENOMIC DNA]</scope>
    <source>
        <strain>ATCC 204508 / S288c</strain>
    </source>
</reference>
<reference key="2">
    <citation type="journal article" date="2014" name="G3 (Bethesda)">
        <title>The reference genome sequence of Saccharomyces cerevisiae: Then and now.</title>
        <authorList>
            <person name="Engel S.R."/>
            <person name="Dietrich F.S."/>
            <person name="Fisk D.G."/>
            <person name="Binkley G."/>
            <person name="Balakrishnan R."/>
            <person name="Costanzo M.C."/>
            <person name="Dwight S.S."/>
            <person name="Hitz B.C."/>
            <person name="Karra K."/>
            <person name="Nash R.S."/>
            <person name="Weng S."/>
            <person name="Wong E.D."/>
            <person name="Lloyd P."/>
            <person name="Skrzypek M.S."/>
            <person name="Miyasato S.R."/>
            <person name="Simison M."/>
            <person name="Cherry J.M."/>
        </authorList>
    </citation>
    <scope>GENOME REANNOTATION</scope>
    <source>
        <strain>ATCC 204508 / S288c</strain>
    </source>
</reference>
<reference key="3">
    <citation type="journal article" date="2003" name="Genome Biol.">
        <title>Reinvestigation of the Saccharomyces cerevisiae genome annotation by comparison to the genome of a related fungus: Ashbya gossypii.</title>
        <authorList>
            <person name="Brachat S."/>
            <person name="Dietrich F.S."/>
            <person name="Voegeli S."/>
            <person name="Zhang Z."/>
            <person name="Stuart L."/>
            <person name="Lerch A."/>
            <person name="Gates K."/>
            <person name="Gaffney T.D."/>
            <person name="Philippsen P."/>
        </authorList>
    </citation>
    <scope>GENOME REANNOTATION</scope>
</reference>
<reference key="4">
    <citation type="journal article" date="2008" name="Mol. Cell. Biol.">
        <title>Coa2 is an assembly factor for yeast cytochrome C oxidase biogenesis that facilitates the maturation of cox1.</title>
        <authorList>
            <person name="Pierrel F."/>
            <person name="Khalimonchuk O."/>
            <person name="Cobine P.A."/>
            <person name="Bestwick M.L."/>
            <person name="Winge D.R."/>
        </authorList>
    </citation>
    <scope>FUNCTION</scope>
    <scope>INTERACTION WITH SHY1</scope>
    <scope>SUBCELLULAR LOCATION</scope>
</reference>
<feature type="chain" id="PRO_0000238657" description="Cytochrome c oxidase assembly factor 2">
    <location>
        <begin position="1"/>
        <end position="68"/>
    </location>
</feature>
<gene>
    <name type="primary">COA2</name>
    <name type="ordered locus">YPL189C-A</name>
</gene>
<protein>
    <recommendedName>
        <fullName>Cytochrome c oxidase assembly factor 2</fullName>
    </recommendedName>
</protein>
<evidence type="ECO:0000269" key="1">
    <source>
    </source>
</evidence>
<evidence type="ECO:0000305" key="2"/>
<accession>Q3E823</accession>
<accession>D6W3H9</accession>
<name>COA2_YEAST</name>
<organism>
    <name type="scientific">Saccharomyces cerevisiae (strain ATCC 204508 / S288c)</name>
    <name type="common">Baker's yeast</name>
    <dbReference type="NCBI Taxonomy" id="559292"/>
    <lineage>
        <taxon>Eukaryota</taxon>
        <taxon>Fungi</taxon>
        <taxon>Dikarya</taxon>
        <taxon>Ascomycota</taxon>
        <taxon>Saccharomycotina</taxon>
        <taxon>Saccharomycetes</taxon>
        <taxon>Saccharomycetales</taxon>
        <taxon>Saccharomycetaceae</taxon>
        <taxon>Saccharomyces</taxon>
    </lineage>
</organism>
<sequence length="68" mass="7533">MRAVTRNKIVNNLYFSTFLIAFASVAIGSVLPCPAHSVDSDSPAVQQHKLQLAHEQELKRKDALSKKI</sequence>